<reference key="1">
    <citation type="journal article" date="2006" name="PLoS Genet.">
        <title>Who ate whom? Adaptive Helicobacter genomic changes that accompanied a host jump from early humans to large felines.</title>
        <authorList>
            <person name="Eppinger M."/>
            <person name="Baar C."/>
            <person name="Linz B."/>
            <person name="Raddatz G."/>
            <person name="Lanz C."/>
            <person name="Keller H."/>
            <person name="Morelli G."/>
            <person name="Gressmann H."/>
            <person name="Achtman M."/>
            <person name="Schuster S.C."/>
        </authorList>
    </citation>
    <scope>NUCLEOTIDE SEQUENCE [LARGE SCALE GENOMIC DNA]</scope>
    <source>
        <strain>Sheeba</strain>
    </source>
</reference>
<comment type="function">
    <text evidence="1">Catalyzes the specific phosphorylation of the 3-hydroxyl group of shikimic acid using ATP as a cosubstrate.</text>
</comment>
<comment type="catalytic activity">
    <reaction evidence="1">
        <text>shikimate + ATP = 3-phosphoshikimate + ADP + H(+)</text>
        <dbReference type="Rhea" id="RHEA:13121"/>
        <dbReference type="ChEBI" id="CHEBI:15378"/>
        <dbReference type="ChEBI" id="CHEBI:30616"/>
        <dbReference type="ChEBI" id="CHEBI:36208"/>
        <dbReference type="ChEBI" id="CHEBI:145989"/>
        <dbReference type="ChEBI" id="CHEBI:456216"/>
        <dbReference type="EC" id="2.7.1.71"/>
    </reaction>
</comment>
<comment type="cofactor">
    <cofactor evidence="1">
        <name>Mg(2+)</name>
        <dbReference type="ChEBI" id="CHEBI:18420"/>
    </cofactor>
    <text evidence="1">Binds 1 Mg(2+) ion per subunit.</text>
</comment>
<comment type="pathway">
    <text evidence="1">Metabolic intermediate biosynthesis; chorismate biosynthesis; chorismate from D-erythrose 4-phosphate and phosphoenolpyruvate: step 5/7.</text>
</comment>
<comment type="subunit">
    <text evidence="1">Monomer.</text>
</comment>
<comment type="subcellular location">
    <subcellularLocation>
        <location evidence="1">Cytoplasm</location>
    </subcellularLocation>
</comment>
<comment type="similarity">
    <text evidence="1">Belongs to the shikimate kinase family.</text>
</comment>
<proteinExistence type="inferred from homology"/>
<accession>Q17YU7</accession>
<protein>
    <recommendedName>
        <fullName evidence="1">Shikimate kinase</fullName>
        <shortName evidence="1">SK</shortName>
        <ecNumber evidence="1">2.7.1.71</ecNumber>
    </recommendedName>
</protein>
<feature type="chain" id="PRO_1000094392" description="Shikimate kinase">
    <location>
        <begin position="1"/>
        <end position="162"/>
    </location>
</feature>
<feature type="binding site" evidence="1">
    <location>
        <begin position="11"/>
        <end position="16"/>
    </location>
    <ligand>
        <name>ATP</name>
        <dbReference type="ChEBI" id="CHEBI:30616"/>
    </ligand>
</feature>
<feature type="binding site" evidence="1">
    <location>
        <position position="15"/>
    </location>
    <ligand>
        <name>Mg(2+)</name>
        <dbReference type="ChEBI" id="CHEBI:18420"/>
    </ligand>
</feature>
<feature type="binding site" evidence="1">
    <location>
        <position position="33"/>
    </location>
    <ligand>
        <name>substrate</name>
    </ligand>
</feature>
<feature type="binding site" evidence="1">
    <location>
        <position position="57"/>
    </location>
    <ligand>
        <name>substrate</name>
    </ligand>
</feature>
<feature type="binding site" evidence="1">
    <location>
        <position position="80"/>
    </location>
    <ligand>
        <name>substrate</name>
    </ligand>
</feature>
<feature type="binding site" evidence="1">
    <location>
        <position position="116"/>
    </location>
    <ligand>
        <name>ATP</name>
        <dbReference type="ChEBI" id="CHEBI:30616"/>
    </ligand>
</feature>
<feature type="binding site" evidence="1">
    <location>
        <position position="132"/>
    </location>
    <ligand>
        <name>substrate</name>
    </ligand>
</feature>
<evidence type="ECO:0000255" key="1">
    <source>
        <dbReference type="HAMAP-Rule" id="MF_00109"/>
    </source>
</evidence>
<organism>
    <name type="scientific">Helicobacter acinonychis (strain Sheeba)</name>
    <dbReference type="NCBI Taxonomy" id="382638"/>
    <lineage>
        <taxon>Bacteria</taxon>
        <taxon>Pseudomonadati</taxon>
        <taxon>Campylobacterota</taxon>
        <taxon>Epsilonproteobacteria</taxon>
        <taxon>Campylobacterales</taxon>
        <taxon>Helicobacteraceae</taxon>
        <taxon>Helicobacter</taxon>
    </lineage>
</organism>
<gene>
    <name evidence="1" type="primary">aroK</name>
    <name type="ordered locus">Hac_0340</name>
</gene>
<name>AROK_HELAH</name>
<dbReference type="EC" id="2.7.1.71" evidence="1"/>
<dbReference type="EMBL" id="AM260522">
    <property type="protein sequence ID" value="CAJ99179.1"/>
    <property type="molecule type" value="Genomic_DNA"/>
</dbReference>
<dbReference type="RefSeq" id="WP_011577294.1">
    <property type="nucleotide sequence ID" value="NC_008229.1"/>
</dbReference>
<dbReference type="SMR" id="Q17YU7"/>
<dbReference type="STRING" id="382638.Hac_0340"/>
<dbReference type="GeneID" id="31757851"/>
<dbReference type="KEGG" id="hac:Hac_0340"/>
<dbReference type="eggNOG" id="COG0703">
    <property type="taxonomic scope" value="Bacteria"/>
</dbReference>
<dbReference type="HOGENOM" id="CLU_057607_4_0_7"/>
<dbReference type="OrthoDB" id="9800332at2"/>
<dbReference type="BioCyc" id="HACI382638:HAC_RS01525-MONOMER"/>
<dbReference type="UniPathway" id="UPA00053">
    <property type="reaction ID" value="UER00088"/>
</dbReference>
<dbReference type="Proteomes" id="UP000000775">
    <property type="component" value="Chromosome"/>
</dbReference>
<dbReference type="GO" id="GO:0005829">
    <property type="term" value="C:cytosol"/>
    <property type="evidence" value="ECO:0007669"/>
    <property type="project" value="TreeGrafter"/>
</dbReference>
<dbReference type="GO" id="GO:0005524">
    <property type="term" value="F:ATP binding"/>
    <property type="evidence" value="ECO:0007669"/>
    <property type="project" value="UniProtKB-UniRule"/>
</dbReference>
<dbReference type="GO" id="GO:0000287">
    <property type="term" value="F:magnesium ion binding"/>
    <property type="evidence" value="ECO:0007669"/>
    <property type="project" value="UniProtKB-UniRule"/>
</dbReference>
<dbReference type="GO" id="GO:0004765">
    <property type="term" value="F:shikimate kinase activity"/>
    <property type="evidence" value="ECO:0007669"/>
    <property type="project" value="UniProtKB-UniRule"/>
</dbReference>
<dbReference type="GO" id="GO:0008652">
    <property type="term" value="P:amino acid biosynthetic process"/>
    <property type="evidence" value="ECO:0007669"/>
    <property type="project" value="UniProtKB-KW"/>
</dbReference>
<dbReference type="GO" id="GO:0009073">
    <property type="term" value="P:aromatic amino acid family biosynthetic process"/>
    <property type="evidence" value="ECO:0007669"/>
    <property type="project" value="UniProtKB-KW"/>
</dbReference>
<dbReference type="GO" id="GO:0009423">
    <property type="term" value="P:chorismate biosynthetic process"/>
    <property type="evidence" value="ECO:0007669"/>
    <property type="project" value="UniProtKB-UniRule"/>
</dbReference>
<dbReference type="CDD" id="cd00464">
    <property type="entry name" value="SK"/>
    <property type="match status" value="1"/>
</dbReference>
<dbReference type="Gene3D" id="3.40.50.300">
    <property type="entry name" value="P-loop containing nucleotide triphosphate hydrolases"/>
    <property type="match status" value="1"/>
</dbReference>
<dbReference type="HAMAP" id="MF_00109">
    <property type="entry name" value="Shikimate_kinase"/>
    <property type="match status" value="1"/>
</dbReference>
<dbReference type="InterPro" id="IPR027417">
    <property type="entry name" value="P-loop_NTPase"/>
</dbReference>
<dbReference type="InterPro" id="IPR031322">
    <property type="entry name" value="Shikimate/glucono_kinase"/>
</dbReference>
<dbReference type="InterPro" id="IPR000623">
    <property type="entry name" value="Shikimate_kinase/TSH1"/>
</dbReference>
<dbReference type="InterPro" id="IPR023000">
    <property type="entry name" value="Shikimate_kinase_CS"/>
</dbReference>
<dbReference type="PANTHER" id="PTHR21087">
    <property type="entry name" value="SHIKIMATE KINASE"/>
    <property type="match status" value="1"/>
</dbReference>
<dbReference type="PANTHER" id="PTHR21087:SF16">
    <property type="entry name" value="SHIKIMATE KINASE 1, CHLOROPLASTIC"/>
    <property type="match status" value="1"/>
</dbReference>
<dbReference type="Pfam" id="PF01202">
    <property type="entry name" value="SKI"/>
    <property type="match status" value="1"/>
</dbReference>
<dbReference type="PRINTS" id="PR01100">
    <property type="entry name" value="SHIKIMTKNASE"/>
</dbReference>
<dbReference type="SUPFAM" id="SSF52540">
    <property type="entry name" value="P-loop containing nucleoside triphosphate hydrolases"/>
    <property type="match status" value="1"/>
</dbReference>
<dbReference type="PROSITE" id="PS01128">
    <property type="entry name" value="SHIKIMATE_KINASE"/>
    <property type="match status" value="1"/>
</dbReference>
<keyword id="KW-0028">Amino-acid biosynthesis</keyword>
<keyword id="KW-0057">Aromatic amino acid biosynthesis</keyword>
<keyword id="KW-0067">ATP-binding</keyword>
<keyword id="KW-0963">Cytoplasm</keyword>
<keyword id="KW-0418">Kinase</keyword>
<keyword id="KW-0460">Magnesium</keyword>
<keyword id="KW-0479">Metal-binding</keyword>
<keyword id="KW-0547">Nucleotide-binding</keyword>
<keyword id="KW-0808">Transferase</keyword>
<sequence>MQHLVLIGFMGSGKSSLAQELGLALNLEVLDTDMIISERVGLSVRGIFEELGEDNFRMFEKNLIDELKMLKNPHVISTGGGIIMHDNFKGLGTTFYLKMDFETIIKRLSKKEREKRPLLNNLTQAKELFEKRQALYEKNASFIINAQGGLKKSLKQALQFIA</sequence>